<gene>
    <name type="ordered locus">Bcer98_0391</name>
</gene>
<name>Y391_BACCN</name>
<evidence type="ECO:0000255" key="1">
    <source>
        <dbReference type="HAMAP-Rule" id="MF_00829"/>
    </source>
</evidence>
<feature type="chain" id="PRO_1000083945" description="UPF0435 protein Bcer98_0391">
    <location>
        <begin position="1"/>
        <end position="74"/>
    </location>
</feature>
<accession>A7GKT9</accession>
<sequence length="74" mass="8615">MDLSVKSQENVEHMVEAIKEKLRMVNAGAMKAANFDEDMYEDLRDIYDHVMKRETFSISEMQAITEELGTLMKK</sequence>
<proteinExistence type="inferred from homology"/>
<organism>
    <name type="scientific">Bacillus cytotoxicus (strain DSM 22905 / CIP 110041 / 391-98 / NVH 391-98)</name>
    <dbReference type="NCBI Taxonomy" id="315749"/>
    <lineage>
        <taxon>Bacteria</taxon>
        <taxon>Bacillati</taxon>
        <taxon>Bacillota</taxon>
        <taxon>Bacilli</taxon>
        <taxon>Bacillales</taxon>
        <taxon>Bacillaceae</taxon>
        <taxon>Bacillus</taxon>
        <taxon>Bacillus cereus group</taxon>
    </lineage>
</organism>
<protein>
    <recommendedName>
        <fullName evidence="1">UPF0435 protein Bcer98_0391</fullName>
    </recommendedName>
</protein>
<comment type="similarity">
    <text evidence="1">Belongs to the UPF0435 family.</text>
</comment>
<dbReference type="EMBL" id="CP000764">
    <property type="protein sequence ID" value="ABS20747.1"/>
    <property type="molecule type" value="Genomic_DNA"/>
</dbReference>
<dbReference type="RefSeq" id="WP_011983505.1">
    <property type="nucleotide sequence ID" value="NC_009674.1"/>
</dbReference>
<dbReference type="SMR" id="A7GKT9"/>
<dbReference type="STRING" id="315749.Bcer98_0391"/>
<dbReference type="GeneID" id="33895742"/>
<dbReference type="KEGG" id="bcy:Bcer98_0391"/>
<dbReference type="eggNOG" id="COG4840">
    <property type="taxonomic scope" value="Bacteria"/>
</dbReference>
<dbReference type="HOGENOM" id="CLU_199533_1_0_9"/>
<dbReference type="OrthoDB" id="2361695at2"/>
<dbReference type="Proteomes" id="UP000002300">
    <property type="component" value="Chromosome"/>
</dbReference>
<dbReference type="HAMAP" id="MF_00829">
    <property type="entry name" value="UPF0435"/>
    <property type="match status" value="1"/>
</dbReference>
<dbReference type="InterPro" id="IPR009507">
    <property type="entry name" value="UPF0435"/>
</dbReference>
<dbReference type="Pfam" id="PF06569">
    <property type="entry name" value="DUF1128"/>
    <property type="match status" value="1"/>
</dbReference>
<reference key="1">
    <citation type="journal article" date="2008" name="Chem. Biol. Interact.">
        <title>Extending the Bacillus cereus group genomics to putative food-borne pathogens of different toxicity.</title>
        <authorList>
            <person name="Lapidus A."/>
            <person name="Goltsman E."/>
            <person name="Auger S."/>
            <person name="Galleron N."/>
            <person name="Segurens B."/>
            <person name="Dossat C."/>
            <person name="Land M.L."/>
            <person name="Broussolle V."/>
            <person name="Brillard J."/>
            <person name="Guinebretiere M.-H."/>
            <person name="Sanchis V."/>
            <person name="Nguen-the C."/>
            <person name="Lereclus D."/>
            <person name="Richardson P."/>
            <person name="Wincker P."/>
            <person name="Weissenbach J."/>
            <person name="Ehrlich S.D."/>
            <person name="Sorokin A."/>
        </authorList>
    </citation>
    <scope>NUCLEOTIDE SEQUENCE [LARGE SCALE GENOMIC DNA]</scope>
    <source>
        <strain>DSM 22905 / CIP 110041 / 391-98 / NVH 391-98</strain>
    </source>
</reference>